<protein>
    <recommendedName>
        <fullName evidence="1">UPF0235 protein Mext_2130</fullName>
    </recommendedName>
</protein>
<accession>A9W4L9</accession>
<evidence type="ECO:0000255" key="1">
    <source>
        <dbReference type="HAMAP-Rule" id="MF_00634"/>
    </source>
</evidence>
<feature type="chain" id="PRO_1000212350" description="UPF0235 protein Mext_2130">
    <location>
        <begin position="1"/>
        <end position="105"/>
    </location>
</feature>
<proteinExistence type="inferred from homology"/>
<name>Y2130_METEP</name>
<organism>
    <name type="scientific">Methylorubrum extorquens (strain PA1)</name>
    <name type="common">Methylobacterium extorquens</name>
    <dbReference type="NCBI Taxonomy" id="419610"/>
    <lineage>
        <taxon>Bacteria</taxon>
        <taxon>Pseudomonadati</taxon>
        <taxon>Pseudomonadota</taxon>
        <taxon>Alphaproteobacteria</taxon>
        <taxon>Hyphomicrobiales</taxon>
        <taxon>Methylobacteriaceae</taxon>
        <taxon>Methylorubrum</taxon>
    </lineage>
</organism>
<gene>
    <name type="ordered locus">Mext_2130</name>
</gene>
<reference key="1">
    <citation type="submission" date="2007-12" db="EMBL/GenBank/DDBJ databases">
        <title>Complete sequence of Methylobacterium extorquens PA1.</title>
        <authorList>
            <consortium name="US DOE Joint Genome Institute"/>
            <person name="Copeland A."/>
            <person name="Lucas S."/>
            <person name="Lapidus A."/>
            <person name="Barry K."/>
            <person name="Glavina del Rio T."/>
            <person name="Dalin E."/>
            <person name="Tice H."/>
            <person name="Pitluck S."/>
            <person name="Saunders E."/>
            <person name="Brettin T."/>
            <person name="Bruce D."/>
            <person name="Detter J.C."/>
            <person name="Han C."/>
            <person name="Schmutz J."/>
            <person name="Larimer F."/>
            <person name="Land M."/>
            <person name="Hauser L."/>
            <person name="Kyrpides N."/>
            <person name="Kim E."/>
            <person name="Marx C."/>
            <person name="Richardson P."/>
        </authorList>
    </citation>
    <scope>NUCLEOTIDE SEQUENCE [LARGE SCALE GENOMIC DNA]</scope>
    <source>
        <strain>PA1</strain>
    </source>
</reference>
<dbReference type="EMBL" id="CP000908">
    <property type="protein sequence ID" value="ABY30525.1"/>
    <property type="molecule type" value="Genomic_DNA"/>
</dbReference>
<dbReference type="RefSeq" id="WP_012253622.1">
    <property type="nucleotide sequence ID" value="NC_010172.1"/>
</dbReference>
<dbReference type="SMR" id="A9W4L9"/>
<dbReference type="KEGG" id="mex:Mext_2130"/>
<dbReference type="eggNOG" id="COG1872">
    <property type="taxonomic scope" value="Bacteria"/>
</dbReference>
<dbReference type="HOGENOM" id="CLU_130694_3_0_5"/>
<dbReference type="BioCyc" id="MEXT419610:MEXT_RS10750-MONOMER"/>
<dbReference type="GO" id="GO:0005737">
    <property type="term" value="C:cytoplasm"/>
    <property type="evidence" value="ECO:0007669"/>
    <property type="project" value="TreeGrafter"/>
</dbReference>
<dbReference type="Gene3D" id="3.30.1200.10">
    <property type="entry name" value="YggU-like"/>
    <property type="match status" value="1"/>
</dbReference>
<dbReference type="HAMAP" id="MF_00634">
    <property type="entry name" value="UPF0235"/>
    <property type="match status" value="1"/>
</dbReference>
<dbReference type="InterPro" id="IPR003746">
    <property type="entry name" value="DUF167"/>
</dbReference>
<dbReference type="InterPro" id="IPR036591">
    <property type="entry name" value="YggU-like_sf"/>
</dbReference>
<dbReference type="NCBIfam" id="TIGR00251">
    <property type="entry name" value="DUF167 family protein"/>
    <property type="match status" value="1"/>
</dbReference>
<dbReference type="PANTHER" id="PTHR13420">
    <property type="entry name" value="UPF0235 PROTEIN C15ORF40"/>
    <property type="match status" value="1"/>
</dbReference>
<dbReference type="PANTHER" id="PTHR13420:SF7">
    <property type="entry name" value="UPF0235 PROTEIN C15ORF40"/>
    <property type="match status" value="1"/>
</dbReference>
<dbReference type="Pfam" id="PF02594">
    <property type="entry name" value="DUF167"/>
    <property type="match status" value="1"/>
</dbReference>
<dbReference type="SMART" id="SM01152">
    <property type="entry name" value="DUF167"/>
    <property type="match status" value="1"/>
</dbReference>
<dbReference type="SUPFAM" id="SSF69786">
    <property type="entry name" value="YggU-like"/>
    <property type="match status" value="1"/>
</dbReference>
<sequence>MTQSPFTLEANGLVLAVRLTPRASRTGLDGVRTEASGRPVLSLRVAAPPVEGAANAALTAFVAKSLGLRKAEVTLLSGETSRTKRLLLSGDPQTLAARVEAWLGG</sequence>
<comment type="similarity">
    <text evidence="1">Belongs to the UPF0235 family.</text>
</comment>